<sequence length="65" mass="7667">MKCIQIEMSFTDEYGQVTRLNKTYKPSIIEEHKGEIPRLLLDDFKRFLSSLGFNEKQVSRIVTED</sequence>
<protein>
    <recommendedName>
        <fullName>SPbeta prophage-derived uncharacterized protein YorO</fullName>
    </recommendedName>
</protein>
<keyword id="KW-1185">Reference proteome</keyword>
<reference key="1">
    <citation type="journal article" date="1997" name="Nature">
        <title>The complete genome sequence of the Gram-positive bacterium Bacillus subtilis.</title>
        <authorList>
            <person name="Kunst F."/>
            <person name="Ogasawara N."/>
            <person name="Moszer I."/>
            <person name="Albertini A.M."/>
            <person name="Alloni G."/>
            <person name="Azevedo V."/>
            <person name="Bertero M.G."/>
            <person name="Bessieres P."/>
            <person name="Bolotin A."/>
            <person name="Borchert S."/>
            <person name="Borriss R."/>
            <person name="Boursier L."/>
            <person name="Brans A."/>
            <person name="Braun M."/>
            <person name="Brignell S.C."/>
            <person name="Bron S."/>
            <person name="Brouillet S."/>
            <person name="Bruschi C.V."/>
            <person name="Caldwell B."/>
            <person name="Capuano V."/>
            <person name="Carter N.M."/>
            <person name="Choi S.-K."/>
            <person name="Codani J.-J."/>
            <person name="Connerton I.F."/>
            <person name="Cummings N.J."/>
            <person name="Daniel R.A."/>
            <person name="Denizot F."/>
            <person name="Devine K.M."/>
            <person name="Duesterhoeft A."/>
            <person name="Ehrlich S.D."/>
            <person name="Emmerson P.T."/>
            <person name="Entian K.-D."/>
            <person name="Errington J."/>
            <person name="Fabret C."/>
            <person name="Ferrari E."/>
            <person name="Foulger D."/>
            <person name="Fritz C."/>
            <person name="Fujita M."/>
            <person name="Fujita Y."/>
            <person name="Fuma S."/>
            <person name="Galizzi A."/>
            <person name="Galleron N."/>
            <person name="Ghim S.-Y."/>
            <person name="Glaser P."/>
            <person name="Goffeau A."/>
            <person name="Golightly E.J."/>
            <person name="Grandi G."/>
            <person name="Guiseppi G."/>
            <person name="Guy B.J."/>
            <person name="Haga K."/>
            <person name="Haiech J."/>
            <person name="Harwood C.R."/>
            <person name="Henaut A."/>
            <person name="Hilbert H."/>
            <person name="Holsappel S."/>
            <person name="Hosono S."/>
            <person name="Hullo M.-F."/>
            <person name="Itaya M."/>
            <person name="Jones L.-M."/>
            <person name="Joris B."/>
            <person name="Karamata D."/>
            <person name="Kasahara Y."/>
            <person name="Klaerr-Blanchard M."/>
            <person name="Klein C."/>
            <person name="Kobayashi Y."/>
            <person name="Koetter P."/>
            <person name="Koningstein G."/>
            <person name="Krogh S."/>
            <person name="Kumano M."/>
            <person name="Kurita K."/>
            <person name="Lapidus A."/>
            <person name="Lardinois S."/>
            <person name="Lauber J."/>
            <person name="Lazarevic V."/>
            <person name="Lee S.-M."/>
            <person name="Levine A."/>
            <person name="Liu H."/>
            <person name="Masuda S."/>
            <person name="Mauel C."/>
            <person name="Medigue C."/>
            <person name="Medina N."/>
            <person name="Mellado R.P."/>
            <person name="Mizuno M."/>
            <person name="Moestl D."/>
            <person name="Nakai S."/>
            <person name="Noback M."/>
            <person name="Noone D."/>
            <person name="O'Reilly M."/>
            <person name="Ogawa K."/>
            <person name="Ogiwara A."/>
            <person name="Oudega B."/>
            <person name="Park S.-H."/>
            <person name="Parro V."/>
            <person name="Pohl T.M."/>
            <person name="Portetelle D."/>
            <person name="Porwollik S."/>
            <person name="Prescott A.M."/>
            <person name="Presecan E."/>
            <person name="Pujic P."/>
            <person name="Purnelle B."/>
            <person name="Rapoport G."/>
            <person name="Rey M."/>
            <person name="Reynolds S."/>
            <person name="Rieger M."/>
            <person name="Rivolta C."/>
            <person name="Rocha E."/>
            <person name="Roche B."/>
            <person name="Rose M."/>
            <person name="Sadaie Y."/>
            <person name="Sato T."/>
            <person name="Scanlan E."/>
            <person name="Schleich S."/>
            <person name="Schroeter R."/>
            <person name="Scoffone F."/>
            <person name="Sekiguchi J."/>
            <person name="Sekowska A."/>
            <person name="Seror S.J."/>
            <person name="Serror P."/>
            <person name="Shin B.-S."/>
            <person name="Soldo B."/>
            <person name="Sorokin A."/>
            <person name="Tacconi E."/>
            <person name="Takagi T."/>
            <person name="Takahashi H."/>
            <person name="Takemaru K."/>
            <person name="Takeuchi M."/>
            <person name="Tamakoshi A."/>
            <person name="Tanaka T."/>
            <person name="Terpstra P."/>
            <person name="Tognoni A."/>
            <person name="Tosato V."/>
            <person name="Uchiyama S."/>
            <person name="Vandenbol M."/>
            <person name="Vannier F."/>
            <person name="Vassarotti A."/>
            <person name="Viari A."/>
            <person name="Wambutt R."/>
            <person name="Wedler E."/>
            <person name="Wedler H."/>
            <person name="Weitzenegger T."/>
            <person name="Winters P."/>
            <person name="Wipat A."/>
            <person name="Yamamoto H."/>
            <person name="Yamane K."/>
            <person name="Yasumoto K."/>
            <person name="Yata K."/>
            <person name="Yoshida K."/>
            <person name="Yoshikawa H.-F."/>
            <person name="Zumstein E."/>
            <person name="Yoshikawa H."/>
            <person name="Danchin A."/>
        </authorList>
    </citation>
    <scope>NUCLEOTIDE SEQUENCE [LARGE SCALE GENOMIC DNA]</scope>
    <source>
        <strain>168</strain>
    </source>
</reference>
<gene>
    <name type="primary">yorO</name>
    <name type="ordered locus">BSU20310</name>
</gene>
<dbReference type="EMBL" id="AL009126">
    <property type="protein sequence ID" value="CAB13923.1"/>
    <property type="molecule type" value="Genomic_DNA"/>
</dbReference>
<dbReference type="RefSeq" id="NP_389913.1">
    <property type="nucleotide sequence ID" value="NC_000964.3"/>
</dbReference>
<dbReference type="RefSeq" id="WP_009967473.1">
    <property type="nucleotide sequence ID" value="NZ_OZ025638.1"/>
</dbReference>
<dbReference type="SMR" id="O31899"/>
<dbReference type="FunCoup" id="O31899">
    <property type="interactions" value="78"/>
</dbReference>
<dbReference type="STRING" id="224308.BSU20310"/>
<dbReference type="PaxDb" id="224308-BSU20310"/>
<dbReference type="EnsemblBacteria" id="CAB13923">
    <property type="protein sequence ID" value="CAB13923"/>
    <property type="gene ID" value="BSU_20310"/>
</dbReference>
<dbReference type="GeneID" id="939542"/>
<dbReference type="KEGG" id="bsu:BSU20310"/>
<dbReference type="PATRIC" id="fig|224308.179.peg.2221"/>
<dbReference type="InParanoid" id="O31899"/>
<dbReference type="OrthoDB" id="2894457at2"/>
<dbReference type="BioCyc" id="BSUB:BSU20310-MONOMER"/>
<dbReference type="Proteomes" id="UP000001570">
    <property type="component" value="Chromosome"/>
</dbReference>
<proteinExistence type="predicted"/>
<accession>O31899</accession>
<feature type="chain" id="PRO_0000369125" description="SPbeta prophage-derived uncharacterized protein YorO">
    <location>
        <begin position="1"/>
        <end position="65"/>
    </location>
</feature>
<organism>
    <name type="scientific">Bacillus subtilis (strain 168)</name>
    <dbReference type="NCBI Taxonomy" id="224308"/>
    <lineage>
        <taxon>Bacteria</taxon>
        <taxon>Bacillati</taxon>
        <taxon>Bacillota</taxon>
        <taxon>Bacilli</taxon>
        <taxon>Bacillales</taxon>
        <taxon>Bacillaceae</taxon>
        <taxon>Bacillus</taxon>
    </lineage>
</organism>
<name>YORO_BACSU</name>